<comment type="function">
    <text evidence="1">Catalyzes the phosphorylation of the 3'-hydroxyl group of dephosphocoenzyme A to form coenzyme A.</text>
</comment>
<comment type="catalytic activity">
    <reaction evidence="1">
        <text>3'-dephospho-CoA + ATP = ADP + CoA + H(+)</text>
        <dbReference type="Rhea" id="RHEA:18245"/>
        <dbReference type="ChEBI" id="CHEBI:15378"/>
        <dbReference type="ChEBI" id="CHEBI:30616"/>
        <dbReference type="ChEBI" id="CHEBI:57287"/>
        <dbReference type="ChEBI" id="CHEBI:57328"/>
        <dbReference type="ChEBI" id="CHEBI:456216"/>
        <dbReference type="EC" id="2.7.1.24"/>
    </reaction>
</comment>
<comment type="pathway">
    <text evidence="1">Cofactor biosynthesis; coenzyme A biosynthesis; CoA from (R)-pantothenate: step 5/5.</text>
</comment>
<comment type="subcellular location">
    <subcellularLocation>
        <location evidence="1">Cytoplasm</location>
    </subcellularLocation>
</comment>
<comment type="similarity">
    <text evidence="1">Belongs to the CoaE family.</text>
</comment>
<name>COAE_PORGI</name>
<sequence>MITIGITGGIGSGKSVVSRILLTLGIPVYDSDSRAKWLNDHSPVVRQALTGLIGSDLYENGILRRDRLAAAIFSSGDLLEQVNGIIHPEVKKDFCQWRSECESDLCAIESAILFSSGFNSLCDTVIRVDAPEKIRQERAMARDGSSAETMRQRMLSQEREQSLAKAGADHTVLNAPPHLLVPQVVRIIETVRTKRPNPPDRL</sequence>
<proteinExistence type="inferred from homology"/>
<dbReference type="EC" id="2.7.1.24" evidence="1"/>
<dbReference type="EMBL" id="AE015924">
    <property type="protein sequence ID" value="AAQ65677.1"/>
    <property type="molecule type" value="Genomic_DNA"/>
</dbReference>
<dbReference type="RefSeq" id="WP_005873860.1">
    <property type="nucleotide sequence ID" value="NC_002950.2"/>
</dbReference>
<dbReference type="SMR" id="Q7MWV3"/>
<dbReference type="STRING" id="242619.PG_0483"/>
<dbReference type="EnsemblBacteria" id="AAQ65677">
    <property type="protein sequence ID" value="AAQ65677"/>
    <property type="gene ID" value="PG_0483"/>
</dbReference>
<dbReference type="KEGG" id="pgi:PG_0483"/>
<dbReference type="PATRIC" id="fig|242619.8.peg.441"/>
<dbReference type="eggNOG" id="COG0237">
    <property type="taxonomic scope" value="Bacteria"/>
</dbReference>
<dbReference type="HOGENOM" id="CLU_057180_3_1_10"/>
<dbReference type="BioCyc" id="PGIN242619:G1G02-446-MONOMER"/>
<dbReference type="UniPathway" id="UPA00241">
    <property type="reaction ID" value="UER00356"/>
</dbReference>
<dbReference type="Proteomes" id="UP000000588">
    <property type="component" value="Chromosome"/>
</dbReference>
<dbReference type="GO" id="GO:0005737">
    <property type="term" value="C:cytoplasm"/>
    <property type="evidence" value="ECO:0007669"/>
    <property type="project" value="UniProtKB-SubCell"/>
</dbReference>
<dbReference type="GO" id="GO:0005524">
    <property type="term" value="F:ATP binding"/>
    <property type="evidence" value="ECO:0007669"/>
    <property type="project" value="UniProtKB-UniRule"/>
</dbReference>
<dbReference type="GO" id="GO:0004140">
    <property type="term" value="F:dephospho-CoA kinase activity"/>
    <property type="evidence" value="ECO:0007669"/>
    <property type="project" value="UniProtKB-UniRule"/>
</dbReference>
<dbReference type="GO" id="GO:0015937">
    <property type="term" value="P:coenzyme A biosynthetic process"/>
    <property type="evidence" value="ECO:0007669"/>
    <property type="project" value="UniProtKB-UniRule"/>
</dbReference>
<dbReference type="CDD" id="cd02022">
    <property type="entry name" value="DPCK"/>
    <property type="match status" value="1"/>
</dbReference>
<dbReference type="Gene3D" id="3.40.50.300">
    <property type="entry name" value="P-loop containing nucleotide triphosphate hydrolases"/>
    <property type="match status" value="1"/>
</dbReference>
<dbReference type="HAMAP" id="MF_00376">
    <property type="entry name" value="Dephospho_CoA_kinase"/>
    <property type="match status" value="1"/>
</dbReference>
<dbReference type="InterPro" id="IPR001977">
    <property type="entry name" value="Depp_CoAkinase"/>
</dbReference>
<dbReference type="InterPro" id="IPR027417">
    <property type="entry name" value="P-loop_NTPase"/>
</dbReference>
<dbReference type="NCBIfam" id="TIGR00152">
    <property type="entry name" value="dephospho-CoA kinase"/>
    <property type="match status" value="1"/>
</dbReference>
<dbReference type="PANTHER" id="PTHR10695:SF46">
    <property type="entry name" value="BIFUNCTIONAL COENZYME A SYNTHASE-RELATED"/>
    <property type="match status" value="1"/>
</dbReference>
<dbReference type="PANTHER" id="PTHR10695">
    <property type="entry name" value="DEPHOSPHO-COA KINASE-RELATED"/>
    <property type="match status" value="1"/>
</dbReference>
<dbReference type="Pfam" id="PF01121">
    <property type="entry name" value="CoaE"/>
    <property type="match status" value="1"/>
</dbReference>
<dbReference type="SUPFAM" id="SSF52540">
    <property type="entry name" value="P-loop containing nucleoside triphosphate hydrolases"/>
    <property type="match status" value="1"/>
</dbReference>
<dbReference type="PROSITE" id="PS51219">
    <property type="entry name" value="DPCK"/>
    <property type="match status" value="1"/>
</dbReference>
<accession>Q7MWV3</accession>
<feature type="chain" id="PRO_0000172975" description="Dephospho-CoA kinase">
    <location>
        <begin position="1"/>
        <end position="202"/>
    </location>
</feature>
<feature type="domain" description="DPCK" evidence="1">
    <location>
        <begin position="3"/>
        <end position="202"/>
    </location>
</feature>
<feature type="region of interest" description="Disordered" evidence="2">
    <location>
        <begin position="138"/>
        <end position="161"/>
    </location>
</feature>
<feature type="binding site" evidence="1">
    <location>
        <begin position="11"/>
        <end position="16"/>
    </location>
    <ligand>
        <name>ATP</name>
        <dbReference type="ChEBI" id="CHEBI:30616"/>
    </ligand>
</feature>
<protein>
    <recommendedName>
        <fullName evidence="1">Dephospho-CoA kinase</fullName>
        <ecNumber evidence="1">2.7.1.24</ecNumber>
    </recommendedName>
    <alternativeName>
        <fullName evidence="1">Dephosphocoenzyme A kinase</fullName>
    </alternativeName>
</protein>
<organism>
    <name type="scientific">Porphyromonas gingivalis (strain ATCC BAA-308 / W83)</name>
    <dbReference type="NCBI Taxonomy" id="242619"/>
    <lineage>
        <taxon>Bacteria</taxon>
        <taxon>Pseudomonadati</taxon>
        <taxon>Bacteroidota</taxon>
        <taxon>Bacteroidia</taxon>
        <taxon>Bacteroidales</taxon>
        <taxon>Porphyromonadaceae</taxon>
        <taxon>Porphyromonas</taxon>
    </lineage>
</organism>
<evidence type="ECO:0000255" key="1">
    <source>
        <dbReference type="HAMAP-Rule" id="MF_00376"/>
    </source>
</evidence>
<evidence type="ECO:0000256" key="2">
    <source>
        <dbReference type="SAM" id="MobiDB-lite"/>
    </source>
</evidence>
<keyword id="KW-0067">ATP-binding</keyword>
<keyword id="KW-0173">Coenzyme A biosynthesis</keyword>
<keyword id="KW-0963">Cytoplasm</keyword>
<keyword id="KW-0418">Kinase</keyword>
<keyword id="KW-0547">Nucleotide-binding</keyword>
<keyword id="KW-1185">Reference proteome</keyword>
<keyword id="KW-0808">Transferase</keyword>
<gene>
    <name evidence="1" type="primary">coaE</name>
    <name type="ordered locus">PG_0483</name>
</gene>
<reference key="1">
    <citation type="journal article" date="2003" name="J. Bacteriol.">
        <title>Complete genome sequence of the oral pathogenic bacterium Porphyromonas gingivalis strain W83.</title>
        <authorList>
            <person name="Nelson K.E."/>
            <person name="Fleischmann R.D."/>
            <person name="DeBoy R.T."/>
            <person name="Paulsen I.T."/>
            <person name="Fouts D.E."/>
            <person name="Eisen J.A."/>
            <person name="Daugherty S.C."/>
            <person name="Dodson R.J."/>
            <person name="Durkin A.S."/>
            <person name="Gwinn M.L."/>
            <person name="Haft D.H."/>
            <person name="Kolonay J.F."/>
            <person name="Nelson W.C."/>
            <person name="Mason T.M."/>
            <person name="Tallon L."/>
            <person name="Gray J."/>
            <person name="Granger D."/>
            <person name="Tettelin H."/>
            <person name="Dong H."/>
            <person name="Galvin J.L."/>
            <person name="Duncan M.J."/>
            <person name="Dewhirst F.E."/>
            <person name="Fraser C.M."/>
        </authorList>
    </citation>
    <scope>NUCLEOTIDE SEQUENCE [LARGE SCALE GENOMIC DNA]</scope>
    <source>
        <strain>ATCC BAA-308 / W83</strain>
    </source>
</reference>